<keyword id="KW-0030">Aminoacyl-tRNA synthetase</keyword>
<keyword id="KW-0067">ATP-binding</keyword>
<keyword id="KW-0963">Cytoplasm</keyword>
<keyword id="KW-0436">Ligase</keyword>
<keyword id="KW-0547">Nucleotide-binding</keyword>
<keyword id="KW-0648">Protein biosynthesis</keyword>
<keyword id="KW-1185">Reference proteome</keyword>
<proteinExistence type="inferred from homology"/>
<name>SYS_METB6</name>
<protein>
    <recommendedName>
        <fullName evidence="1">Serine--tRNA ligase</fullName>
        <ecNumber evidence="1">6.1.1.11</ecNumber>
    </recommendedName>
    <alternativeName>
        <fullName evidence="1">Seryl-tRNA synthetase</fullName>
        <shortName evidence="1">SerRS</shortName>
    </alternativeName>
    <alternativeName>
        <fullName evidence="1">Seryl-tRNA(Ser/Sec) synthetase</fullName>
    </alternativeName>
</protein>
<comment type="function">
    <text evidence="1">Catalyzes the attachment of serine to tRNA(Ser). Is also able to aminoacylate tRNA(Sec) with serine, to form the misacylated tRNA L-seryl-tRNA(Sec), which will be further converted into selenocysteinyl-tRNA(Sec).</text>
</comment>
<comment type="catalytic activity">
    <reaction evidence="1">
        <text>tRNA(Ser) + L-serine + ATP = L-seryl-tRNA(Ser) + AMP + diphosphate + H(+)</text>
        <dbReference type="Rhea" id="RHEA:12292"/>
        <dbReference type="Rhea" id="RHEA-COMP:9669"/>
        <dbReference type="Rhea" id="RHEA-COMP:9703"/>
        <dbReference type="ChEBI" id="CHEBI:15378"/>
        <dbReference type="ChEBI" id="CHEBI:30616"/>
        <dbReference type="ChEBI" id="CHEBI:33019"/>
        <dbReference type="ChEBI" id="CHEBI:33384"/>
        <dbReference type="ChEBI" id="CHEBI:78442"/>
        <dbReference type="ChEBI" id="CHEBI:78533"/>
        <dbReference type="ChEBI" id="CHEBI:456215"/>
        <dbReference type="EC" id="6.1.1.11"/>
    </reaction>
</comment>
<comment type="catalytic activity">
    <reaction evidence="1">
        <text>tRNA(Sec) + L-serine + ATP = L-seryl-tRNA(Sec) + AMP + diphosphate + H(+)</text>
        <dbReference type="Rhea" id="RHEA:42580"/>
        <dbReference type="Rhea" id="RHEA-COMP:9742"/>
        <dbReference type="Rhea" id="RHEA-COMP:10128"/>
        <dbReference type="ChEBI" id="CHEBI:15378"/>
        <dbReference type="ChEBI" id="CHEBI:30616"/>
        <dbReference type="ChEBI" id="CHEBI:33019"/>
        <dbReference type="ChEBI" id="CHEBI:33384"/>
        <dbReference type="ChEBI" id="CHEBI:78442"/>
        <dbReference type="ChEBI" id="CHEBI:78533"/>
        <dbReference type="ChEBI" id="CHEBI:456215"/>
        <dbReference type="EC" id="6.1.1.11"/>
    </reaction>
</comment>
<comment type="pathway">
    <text evidence="1">Aminoacyl-tRNA biosynthesis; selenocysteinyl-tRNA(Sec) biosynthesis; L-seryl-tRNA(Sec) from L-serine and tRNA(Sec): step 1/1.</text>
</comment>
<comment type="subunit">
    <text evidence="1">Homodimer. The tRNA molecule binds across the dimer.</text>
</comment>
<comment type="subcellular location">
    <subcellularLocation>
        <location evidence="1">Cytoplasm</location>
    </subcellularLocation>
</comment>
<comment type="domain">
    <text evidence="1">Consists of two distinct domains, a catalytic core and a N-terminal extension that is involved in tRNA binding.</text>
</comment>
<comment type="similarity">
    <text evidence="1">Belongs to the class-II aminoacyl-tRNA synthetase family. Type-1 seryl-tRNA synthetase subfamily.</text>
</comment>
<feature type="chain" id="PRO_1000019726" description="Serine--tRNA ligase">
    <location>
        <begin position="1"/>
        <end position="425"/>
    </location>
</feature>
<feature type="binding site" evidence="1">
    <location>
        <begin position="232"/>
        <end position="234"/>
    </location>
    <ligand>
        <name>L-serine</name>
        <dbReference type="ChEBI" id="CHEBI:33384"/>
    </ligand>
</feature>
<feature type="binding site" evidence="1">
    <location>
        <begin position="263"/>
        <end position="265"/>
    </location>
    <ligand>
        <name>ATP</name>
        <dbReference type="ChEBI" id="CHEBI:30616"/>
    </ligand>
</feature>
<feature type="binding site" evidence="1">
    <location>
        <position position="279"/>
    </location>
    <ligand>
        <name>ATP</name>
        <dbReference type="ChEBI" id="CHEBI:30616"/>
    </ligand>
</feature>
<feature type="binding site" evidence="1">
    <location>
        <position position="286"/>
    </location>
    <ligand>
        <name>L-serine</name>
        <dbReference type="ChEBI" id="CHEBI:33384"/>
    </ligand>
</feature>
<feature type="binding site" evidence="1">
    <location>
        <begin position="350"/>
        <end position="353"/>
    </location>
    <ligand>
        <name>ATP</name>
        <dbReference type="ChEBI" id="CHEBI:30616"/>
    </ligand>
</feature>
<feature type="binding site" evidence="1">
    <location>
        <position position="387"/>
    </location>
    <ligand>
        <name>L-serine</name>
        <dbReference type="ChEBI" id="CHEBI:33384"/>
    </ligand>
</feature>
<dbReference type="EC" id="6.1.1.11" evidence="1"/>
<dbReference type="EMBL" id="CP000780">
    <property type="protein sequence ID" value="ABS55951.1"/>
    <property type="molecule type" value="Genomic_DNA"/>
</dbReference>
<dbReference type="RefSeq" id="WP_012106984.1">
    <property type="nucleotide sequence ID" value="NC_009712.1"/>
</dbReference>
<dbReference type="SMR" id="A7I890"/>
<dbReference type="STRING" id="456442.Mboo_1433"/>
<dbReference type="GeneID" id="5410750"/>
<dbReference type="KEGG" id="mbn:Mboo_1433"/>
<dbReference type="eggNOG" id="arCOG00403">
    <property type="taxonomic scope" value="Archaea"/>
</dbReference>
<dbReference type="HOGENOM" id="CLU_023797_0_1_2"/>
<dbReference type="OrthoDB" id="35932at2157"/>
<dbReference type="UniPathway" id="UPA00906">
    <property type="reaction ID" value="UER00895"/>
</dbReference>
<dbReference type="Proteomes" id="UP000002408">
    <property type="component" value="Chromosome"/>
</dbReference>
<dbReference type="GO" id="GO:0005737">
    <property type="term" value="C:cytoplasm"/>
    <property type="evidence" value="ECO:0007669"/>
    <property type="project" value="UniProtKB-SubCell"/>
</dbReference>
<dbReference type="GO" id="GO:0005524">
    <property type="term" value="F:ATP binding"/>
    <property type="evidence" value="ECO:0007669"/>
    <property type="project" value="UniProtKB-UniRule"/>
</dbReference>
<dbReference type="GO" id="GO:0004828">
    <property type="term" value="F:serine-tRNA ligase activity"/>
    <property type="evidence" value="ECO:0007669"/>
    <property type="project" value="UniProtKB-UniRule"/>
</dbReference>
<dbReference type="GO" id="GO:0016260">
    <property type="term" value="P:selenocysteine biosynthetic process"/>
    <property type="evidence" value="ECO:0007669"/>
    <property type="project" value="UniProtKB-UniRule"/>
</dbReference>
<dbReference type="GO" id="GO:0006434">
    <property type="term" value="P:seryl-tRNA aminoacylation"/>
    <property type="evidence" value="ECO:0007669"/>
    <property type="project" value="UniProtKB-UniRule"/>
</dbReference>
<dbReference type="CDD" id="cd00770">
    <property type="entry name" value="SerRS_core"/>
    <property type="match status" value="1"/>
</dbReference>
<dbReference type="Gene3D" id="3.30.930.10">
    <property type="entry name" value="Bira Bifunctional Protein, Domain 2"/>
    <property type="match status" value="1"/>
</dbReference>
<dbReference type="Gene3D" id="1.10.287.40">
    <property type="entry name" value="Serine-tRNA synthetase, tRNA binding domain"/>
    <property type="match status" value="1"/>
</dbReference>
<dbReference type="HAMAP" id="MF_00176">
    <property type="entry name" value="Ser_tRNA_synth_type1"/>
    <property type="match status" value="1"/>
</dbReference>
<dbReference type="InterPro" id="IPR002314">
    <property type="entry name" value="aa-tRNA-synt_IIb"/>
</dbReference>
<dbReference type="InterPro" id="IPR006195">
    <property type="entry name" value="aa-tRNA-synth_II"/>
</dbReference>
<dbReference type="InterPro" id="IPR045864">
    <property type="entry name" value="aa-tRNA-synth_II/BPL/LPL"/>
</dbReference>
<dbReference type="InterPro" id="IPR002317">
    <property type="entry name" value="Ser-tRNA-ligase_type_1"/>
</dbReference>
<dbReference type="InterPro" id="IPR015866">
    <property type="entry name" value="Ser-tRNA-synth_1_N"/>
</dbReference>
<dbReference type="InterPro" id="IPR042103">
    <property type="entry name" value="SerRS_1_N_sf"/>
</dbReference>
<dbReference type="InterPro" id="IPR033729">
    <property type="entry name" value="SerRS_core"/>
</dbReference>
<dbReference type="InterPro" id="IPR010978">
    <property type="entry name" value="tRNA-bd_arm"/>
</dbReference>
<dbReference type="NCBIfam" id="TIGR00414">
    <property type="entry name" value="serS"/>
    <property type="match status" value="1"/>
</dbReference>
<dbReference type="PANTHER" id="PTHR11778">
    <property type="entry name" value="SERYL-TRNA SYNTHETASE"/>
    <property type="match status" value="1"/>
</dbReference>
<dbReference type="Pfam" id="PF02403">
    <property type="entry name" value="Seryl_tRNA_N"/>
    <property type="match status" value="1"/>
</dbReference>
<dbReference type="Pfam" id="PF00587">
    <property type="entry name" value="tRNA-synt_2b"/>
    <property type="match status" value="1"/>
</dbReference>
<dbReference type="PIRSF" id="PIRSF001529">
    <property type="entry name" value="Ser-tRNA-synth_IIa"/>
    <property type="match status" value="1"/>
</dbReference>
<dbReference type="PRINTS" id="PR00981">
    <property type="entry name" value="TRNASYNTHSER"/>
</dbReference>
<dbReference type="SUPFAM" id="SSF55681">
    <property type="entry name" value="Class II aaRS and biotin synthetases"/>
    <property type="match status" value="1"/>
</dbReference>
<dbReference type="SUPFAM" id="SSF46589">
    <property type="entry name" value="tRNA-binding arm"/>
    <property type="match status" value="1"/>
</dbReference>
<dbReference type="PROSITE" id="PS50862">
    <property type="entry name" value="AA_TRNA_LIGASE_II"/>
    <property type="match status" value="1"/>
</dbReference>
<sequence>MLEIRFVRASPDVVKADLERRGTPEKIAWVDEILAKDARSRELKVQTDELRRRRNTIAREINEARKTGKDAAPLLREAAELPQKIKANDAEQEEISGIIRTRLMRLPNILHESVPKGKDDTENVEIRRVGTPRTFDFELKNHGQLAADNGWADFERAAKTSGAGFYFLKGGLVMLDLALQRFALDLLGKKGFTPVIPPFMIKRDSYEGVTDLDDFEKVMYKIDGDDTYLIATSEHPIAAMYQDEIFEEKDLPLRLCGLSPCFRREIGAHGLDTKGLFRVHQFTKIEQFVFCRPENSWQIHEELLANAEEVFTKLGLPYHVVNICTGDIGTVAAKKYDIEAWMPRENAYKEVVSCSNCTSYQAASLNIRVRDKENFETKHLVHTLNSTAIATSRALRCILENYQNRDGSVTIPDVLRQYMNDREFL</sequence>
<gene>
    <name evidence="1" type="primary">serS</name>
    <name type="ordered locus">Mboo_1433</name>
</gene>
<accession>A7I890</accession>
<organism>
    <name type="scientific">Methanoregula boonei (strain DSM 21154 / JCM 14090 / 6A8)</name>
    <dbReference type="NCBI Taxonomy" id="456442"/>
    <lineage>
        <taxon>Archaea</taxon>
        <taxon>Methanobacteriati</taxon>
        <taxon>Methanobacteriota</taxon>
        <taxon>Stenosarchaea group</taxon>
        <taxon>Methanomicrobia</taxon>
        <taxon>Methanomicrobiales</taxon>
        <taxon>Methanoregulaceae</taxon>
        <taxon>Methanoregula</taxon>
    </lineage>
</organism>
<evidence type="ECO:0000255" key="1">
    <source>
        <dbReference type="HAMAP-Rule" id="MF_00176"/>
    </source>
</evidence>
<reference key="1">
    <citation type="journal article" date="2015" name="Microbiology">
        <title>Genome of Methanoregula boonei 6A8 reveals adaptations to oligotrophic peatland environments.</title>
        <authorList>
            <person name="Braeuer S."/>
            <person name="Cadillo-Quiroz H."/>
            <person name="Kyrpides N."/>
            <person name="Woyke T."/>
            <person name="Goodwin L."/>
            <person name="Detter C."/>
            <person name="Podell S."/>
            <person name="Yavitt J.B."/>
            <person name="Zinder S.H."/>
        </authorList>
    </citation>
    <scope>NUCLEOTIDE SEQUENCE [LARGE SCALE GENOMIC DNA]</scope>
    <source>
        <strain>DSM 21154 / JCM 14090 / 6A8</strain>
    </source>
</reference>